<organism>
    <name type="scientific">Streptococcus pyogenes serotype M3 (strain SSI-1)</name>
    <dbReference type="NCBI Taxonomy" id="193567"/>
    <lineage>
        <taxon>Bacteria</taxon>
        <taxon>Bacillati</taxon>
        <taxon>Bacillota</taxon>
        <taxon>Bacilli</taxon>
        <taxon>Lactobacillales</taxon>
        <taxon>Streptococcaceae</taxon>
        <taxon>Streptococcus</taxon>
    </lineage>
</organism>
<evidence type="ECO:0000255" key="1">
    <source>
        <dbReference type="HAMAP-Rule" id="MF_02004"/>
    </source>
</evidence>
<feature type="chain" id="PRO_0000411622" description="Valine--tRNA ligase">
    <location>
        <begin position="1"/>
        <end position="882"/>
    </location>
</feature>
<feature type="coiled-coil region" evidence="1">
    <location>
        <begin position="808"/>
        <end position="882"/>
    </location>
</feature>
<feature type="short sequence motif" description="'HIGH' region">
    <location>
        <begin position="45"/>
        <end position="55"/>
    </location>
</feature>
<feature type="short sequence motif" description="'KMSKS' region">
    <location>
        <begin position="519"/>
        <end position="523"/>
    </location>
</feature>
<feature type="binding site" evidence="1">
    <location>
        <position position="522"/>
    </location>
    <ligand>
        <name>ATP</name>
        <dbReference type="ChEBI" id="CHEBI:30616"/>
    </ligand>
</feature>
<dbReference type="EC" id="6.1.1.9" evidence="1"/>
<dbReference type="EMBL" id="BA000034">
    <property type="protein sequence ID" value="BAC63684.1"/>
    <property type="molecule type" value="Genomic_DNA"/>
</dbReference>
<dbReference type="RefSeq" id="WP_011054774.1">
    <property type="nucleotide sequence ID" value="NC_004606.1"/>
</dbReference>
<dbReference type="SMR" id="P0DG65"/>
<dbReference type="KEGG" id="sps:SPs0589"/>
<dbReference type="HOGENOM" id="CLU_001493_0_2_9"/>
<dbReference type="GO" id="GO:0005829">
    <property type="term" value="C:cytosol"/>
    <property type="evidence" value="ECO:0007669"/>
    <property type="project" value="TreeGrafter"/>
</dbReference>
<dbReference type="GO" id="GO:0002161">
    <property type="term" value="F:aminoacyl-tRNA deacylase activity"/>
    <property type="evidence" value="ECO:0007669"/>
    <property type="project" value="InterPro"/>
</dbReference>
<dbReference type="GO" id="GO:0005524">
    <property type="term" value="F:ATP binding"/>
    <property type="evidence" value="ECO:0007669"/>
    <property type="project" value="UniProtKB-UniRule"/>
</dbReference>
<dbReference type="GO" id="GO:0004832">
    <property type="term" value="F:valine-tRNA ligase activity"/>
    <property type="evidence" value="ECO:0007669"/>
    <property type="project" value="UniProtKB-UniRule"/>
</dbReference>
<dbReference type="GO" id="GO:0006438">
    <property type="term" value="P:valyl-tRNA aminoacylation"/>
    <property type="evidence" value="ECO:0007669"/>
    <property type="project" value="UniProtKB-UniRule"/>
</dbReference>
<dbReference type="CDD" id="cd07962">
    <property type="entry name" value="Anticodon_Ia_Val"/>
    <property type="match status" value="1"/>
</dbReference>
<dbReference type="CDD" id="cd00817">
    <property type="entry name" value="ValRS_core"/>
    <property type="match status" value="1"/>
</dbReference>
<dbReference type="FunFam" id="1.10.287.380:FF:000001">
    <property type="entry name" value="Valine--tRNA ligase"/>
    <property type="match status" value="1"/>
</dbReference>
<dbReference type="FunFam" id="1.10.730.10:FF:000014">
    <property type="entry name" value="Valine--tRNA ligase"/>
    <property type="match status" value="1"/>
</dbReference>
<dbReference type="FunFam" id="3.40.50.620:FF:000032">
    <property type="entry name" value="Valine--tRNA ligase"/>
    <property type="match status" value="1"/>
</dbReference>
<dbReference type="FunFam" id="3.40.50.620:FF:000098">
    <property type="entry name" value="Valine--tRNA ligase"/>
    <property type="match status" value="1"/>
</dbReference>
<dbReference type="FunFam" id="3.90.740.10:FF:000005">
    <property type="entry name" value="Valine--tRNA ligase, mitochondrial"/>
    <property type="match status" value="1"/>
</dbReference>
<dbReference type="Gene3D" id="3.40.50.620">
    <property type="entry name" value="HUPs"/>
    <property type="match status" value="3"/>
</dbReference>
<dbReference type="Gene3D" id="1.10.730.10">
    <property type="entry name" value="Isoleucyl-tRNA Synthetase, Domain 1"/>
    <property type="match status" value="1"/>
</dbReference>
<dbReference type="Gene3D" id="1.10.287.380">
    <property type="entry name" value="Valyl-tRNA synthetase, C-terminal domain"/>
    <property type="match status" value="1"/>
</dbReference>
<dbReference type="Gene3D" id="3.90.740.10">
    <property type="entry name" value="Valyl/Leucyl/Isoleucyl-tRNA synthetase, editing domain"/>
    <property type="match status" value="1"/>
</dbReference>
<dbReference type="HAMAP" id="MF_02004">
    <property type="entry name" value="Val_tRNA_synth_type1"/>
    <property type="match status" value="1"/>
</dbReference>
<dbReference type="InterPro" id="IPR001412">
    <property type="entry name" value="aa-tRNA-synth_I_CS"/>
</dbReference>
<dbReference type="InterPro" id="IPR002300">
    <property type="entry name" value="aa-tRNA-synth_Ia"/>
</dbReference>
<dbReference type="InterPro" id="IPR033705">
    <property type="entry name" value="Anticodon_Ia_Val"/>
</dbReference>
<dbReference type="InterPro" id="IPR013155">
    <property type="entry name" value="M/V/L/I-tRNA-synth_anticd-bd"/>
</dbReference>
<dbReference type="InterPro" id="IPR014729">
    <property type="entry name" value="Rossmann-like_a/b/a_fold"/>
</dbReference>
<dbReference type="InterPro" id="IPR010978">
    <property type="entry name" value="tRNA-bd_arm"/>
</dbReference>
<dbReference type="InterPro" id="IPR009080">
    <property type="entry name" value="tRNAsynth_Ia_anticodon-bd"/>
</dbReference>
<dbReference type="InterPro" id="IPR037118">
    <property type="entry name" value="Val-tRNA_synth_C_sf"/>
</dbReference>
<dbReference type="InterPro" id="IPR019499">
    <property type="entry name" value="Val-tRNA_synth_tRNA-bd"/>
</dbReference>
<dbReference type="InterPro" id="IPR009008">
    <property type="entry name" value="Val/Leu/Ile-tRNA-synth_edit"/>
</dbReference>
<dbReference type="InterPro" id="IPR002303">
    <property type="entry name" value="Valyl-tRNA_ligase"/>
</dbReference>
<dbReference type="NCBIfam" id="NF004349">
    <property type="entry name" value="PRK05729.1"/>
    <property type="match status" value="1"/>
</dbReference>
<dbReference type="NCBIfam" id="TIGR00422">
    <property type="entry name" value="valS"/>
    <property type="match status" value="1"/>
</dbReference>
<dbReference type="PANTHER" id="PTHR11946:SF93">
    <property type="entry name" value="VALINE--TRNA LIGASE, CHLOROPLASTIC_MITOCHONDRIAL 2"/>
    <property type="match status" value="1"/>
</dbReference>
<dbReference type="PANTHER" id="PTHR11946">
    <property type="entry name" value="VALYL-TRNA SYNTHETASES"/>
    <property type="match status" value="1"/>
</dbReference>
<dbReference type="Pfam" id="PF08264">
    <property type="entry name" value="Anticodon_1"/>
    <property type="match status" value="1"/>
</dbReference>
<dbReference type="Pfam" id="PF00133">
    <property type="entry name" value="tRNA-synt_1"/>
    <property type="match status" value="2"/>
</dbReference>
<dbReference type="Pfam" id="PF10458">
    <property type="entry name" value="Val_tRNA-synt_C"/>
    <property type="match status" value="1"/>
</dbReference>
<dbReference type="PRINTS" id="PR00986">
    <property type="entry name" value="TRNASYNTHVAL"/>
</dbReference>
<dbReference type="SUPFAM" id="SSF47323">
    <property type="entry name" value="Anticodon-binding domain of a subclass of class I aminoacyl-tRNA synthetases"/>
    <property type="match status" value="1"/>
</dbReference>
<dbReference type="SUPFAM" id="SSF52374">
    <property type="entry name" value="Nucleotidylyl transferase"/>
    <property type="match status" value="1"/>
</dbReference>
<dbReference type="SUPFAM" id="SSF46589">
    <property type="entry name" value="tRNA-binding arm"/>
    <property type="match status" value="1"/>
</dbReference>
<dbReference type="SUPFAM" id="SSF50677">
    <property type="entry name" value="ValRS/IleRS/LeuRS editing domain"/>
    <property type="match status" value="1"/>
</dbReference>
<dbReference type="PROSITE" id="PS00178">
    <property type="entry name" value="AA_TRNA_LIGASE_I"/>
    <property type="match status" value="1"/>
</dbReference>
<name>SYV_STRPQ</name>
<sequence length="882" mass="100802">MTELSPKYNPAEVEAGRYQKWLDADVFKPSGDQKAKPYSIVIPPPNVTGKLHLGHAWDTTLQDIIIRQKRMQGFDTLWLPGMDHAGIATQAKVEERLRGQGITRYDLGREKFLDKVWEWKDEYATTIKEQWGKMGLSVDYSRERFTLDEGLSKAVRKVFVDLYKKGWIYRGEFIINWDPAARTALSDIEVIHKDVEGAFYHMNYMLEDGSRALQVATTRPETMFGDVAVAVNPEDPRYKDLIGKHVILPIVNKLIPIVGDEHADPEFGTGVVKITPAHDPNDFEVGQRHNLPQVNVMNDDGTMNELAGDFAGMDRFEARQATVAKLEELGALVNIEKRVHSVGHSERSGAVVEPRLSTQWFVKMDELAKQAMDNQETDDRVDFYPPRFNDTFLQWMENVHDWVISRQLWWGHQIPAWYNAEGEIYVGEEAPEGDGWTQDEDVLDTWFSSALWPFSTMGWPDTDVEDFKRYFPTSTLVTGYDIIFFWVSRMIFQTLEFTGRQPFQNVLIHGLIRDEEGRKMSKSLGNGIDPMDVIEKYGADSLRWFLSNGSAPGQDVRFSYEKMDASWNFINKIWNISRYILMNNEGLTLEEAESNVAKVAASEAGNVTDQWILHNLNETIAKVTENFDKFEFGVAGHILYNFIWEEFANWYVELTKEVLYSDNEAEKVITRSVLLYTLDKILRLLHPIMPFVTEEIYAQYAQGSIVTAAYPTVTPAFENEAAHKGVESLKDLIRAVRNARAEVNVAPSKPITILVKTADSELEDFFTSNVNYIKRFTNPEKLEISSAIAAPELAMTSIITGAEIYLPLADLLNVEEELARLDKELAKWQKELDMVGKKLGNERFVANAKPEVVQKEKDKQADYQAKYDATQERIAEMQKLVK</sequence>
<protein>
    <recommendedName>
        <fullName evidence="1">Valine--tRNA ligase</fullName>
        <ecNumber evidence="1">6.1.1.9</ecNumber>
    </recommendedName>
    <alternativeName>
        <fullName evidence="1">Valyl-tRNA synthetase</fullName>
        <shortName evidence="1">ValRS</shortName>
    </alternativeName>
</protein>
<comment type="function">
    <text evidence="1">Catalyzes the attachment of valine to tRNA(Val). As ValRS can inadvertently accommodate and process structurally similar amino acids such as threonine, to avoid such errors, it has a 'posttransfer' editing activity that hydrolyzes mischarged Thr-tRNA(Val) in a tRNA-dependent manner.</text>
</comment>
<comment type="catalytic activity">
    <reaction evidence="1">
        <text>tRNA(Val) + L-valine + ATP = L-valyl-tRNA(Val) + AMP + diphosphate</text>
        <dbReference type="Rhea" id="RHEA:10704"/>
        <dbReference type="Rhea" id="RHEA-COMP:9672"/>
        <dbReference type="Rhea" id="RHEA-COMP:9708"/>
        <dbReference type="ChEBI" id="CHEBI:30616"/>
        <dbReference type="ChEBI" id="CHEBI:33019"/>
        <dbReference type="ChEBI" id="CHEBI:57762"/>
        <dbReference type="ChEBI" id="CHEBI:78442"/>
        <dbReference type="ChEBI" id="CHEBI:78537"/>
        <dbReference type="ChEBI" id="CHEBI:456215"/>
        <dbReference type="EC" id="6.1.1.9"/>
    </reaction>
</comment>
<comment type="subunit">
    <text evidence="1">Monomer.</text>
</comment>
<comment type="subcellular location">
    <subcellularLocation>
        <location evidence="1">Cytoplasm</location>
    </subcellularLocation>
</comment>
<comment type="domain">
    <text evidence="1">ValRS has two distinct active sites: one for aminoacylation and one for editing. The misactivated threonine is translocated from the active site to the editing site.</text>
</comment>
<comment type="domain">
    <text evidence="1">The C-terminal coiled-coil domain is crucial for aminoacylation activity.</text>
</comment>
<comment type="similarity">
    <text evidence="1">Belongs to the class-I aminoacyl-tRNA synthetase family. ValS type 1 subfamily.</text>
</comment>
<gene>
    <name evidence="1" type="primary">valS</name>
    <name type="ordered locus">SPs0589</name>
</gene>
<proteinExistence type="inferred from homology"/>
<reference key="1">
    <citation type="journal article" date="2003" name="Genome Res.">
        <title>Genome sequence of an M3 strain of Streptococcus pyogenes reveals a large-scale genomic rearrangement in invasive strains and new insights into phage evolution.</title>
        <authorList>
            <person name="Nakagawa I."/>
            <person name="Kurokawa K."/>
            <person name="Yamashita A."/>
            <person name="Nakata M."/>
            <person name="Tomiyasu Y."/>
            <person name="Okahashi N."/>
            <person name="Kawabata S."/>
            <person name="Yamazaki K."/>
            <person name="Shiba T."/>
            <person name="Yasunaga T."/>
            <person name="Hayashi H."/>
            <person name="Hattori M."/>
            <person name="Hamada S."/>
        </authorList>
    </citation>
    <scope>NUCLEOTIDE SEQUENCE [LARGE SCALE GENOMIC DNA]</scope>
    <source>
        <strain>SSI-1</strain>
    </source>
</reference>
<accession>P0DG65</accession>
<accession>Q79XX8</accession>
<accession>Q8K6M9</accession>
<keyword id="KW-0030">Aminoacyl-tRNA synthetase</keyword>
<keyword id="KW-0067">ATP-binding</keyword>
<keyword id="KW-0175">Coiled coil</keyword>
<keyword id="KW-0963">Cytoplasm</keyword>
<keyword id="KW-0436">Ligase</keyword>
<keyword id="KW-0547">Nucleotide-binding</keyword>
<keyword id="KW-0648">Protein biosynthesis</keyword>